<sequence length="371" mass="42072">MTRPKTFFDISIGGKPQGRIVFELYNDIVPKTAENFLKLCEGNAGMAKTKPDVPLSYKGSIFHRVIKDFMCQFGDFTNFNGTGGESIYDEKFEDENFTVKHDKPFLLSMANAGPNTNGSQAFITCVPTPHLDGKHVVFGEVIQGKRIVRLIENQQCDQENNKPLRDVKIDDCGVLPDDYQVPENAEATPTDEYGDNYEDVLKQDEKVDLKNFDTVLKAIETVKNIGTEQFKKQNYSVALEKYVKCDKFLKEYFPEDLEKEQIEKINQLKVSIPLNIAICALKLKDYKQVLVASSEVLYAEAADEKAKAKALYRRGLAYYHVNDTDMALNDLEMATTFQPNDAAILKAIHNTKLKRKQQNEKAKKSLSKMFS</sequence>
<reference key="1">
    <citation type="journal article" date="1996" name="Yeast">
        <title>Identification of two CyP-40-like cyclophilins in Saccharomyces cerevisiae, one of which is required for normal growth.</title>
        <authorList>
            <person name="Duina A.A."/>
            <person name="Marsh J.A."/>
            <person name="Gaber R.F."/>
        </authorList>
    </citation>
    <scope>NUCLEOTIDE SEQUENCE [MRNA]</scope>
</reference>
<reference key="2">
    <citation type="journal article" date="1997" name="Nature">
        <title>The nucleotide sequence of Saccharomyces cerevisiae chromosome XII.</title>
        <authorList>
            <person name="Johnston M."/>
            <person name="Hillier L.W."/>
            <person name="Riles L."/>
            <person name="Albermann K."/>
            <person name="Andre B."/>
            <person name="Ansorge W."/>
            <person name="Benes V."/>
            <person name="Brueckner M."/>
            <person name="Delius H."/>
            <person name="Dubois E."/>
            <person name="Duesterhoeft A."/>
            <person name="Entian K.-D."/>
            <person name="Floeth M."/>
            <person name="Goffeau A."/>
            <person name="Hebling U."/>
            <person name="Heumann K."/>
            <person name="Heuss-Neitzel D."/>
            <person name="Hilbert H."/>
            <person name="Hilger F."/>
            <person name="Kleine K."/>
            <person name="Koetter P."/>
            <person name="Louis E.J."/>
            <person name="Messenguy F."/>
            <person name="Mewes H.-W."/>
            <person name="Miosga T."/>
            <person name="Moestl D."/>
            <person name="Mueller-Auer S."/>
            <person name="Nentwich U."/>
            <person name="Obermaier B."/>
            <person name="Piravandi E."/>
            <person name="Pohl T.M."/>
            <person name="Portetelle D."/>
            <person name="Purnelle B."/>
            <person name="Rechmann S."/>
            <person name="Rieger M."/>
            <person name="Rinke M."/>
            <person name="Rose M."/>
            <person name="Scharfe M."/>
            <person name="Scherens B."/>
            <person name="Scholler P."/>
            <person name="Schwager C."/>
            <person name="Schwarz S."/>
            <person name="Underwood A.P."/>
            <person name="Urrestarazu L.A."/>
            <person name="Vandenbol M."/>
            <person name="Verhasselt P."/>
            <person name="Vierendeels F."/>
            <person name="Voet M."/>
            <person name="Volckaert G."/>
            <person name="Voss H."/>
            <person name="Wambutt R."/>
            <person name="Wedler E."/>
            <person name="Wedler H."/>
            <person name="Zimmermann F.K."/>
            <person name="Zollner A."/>
            <person name="Hani J."/>
            <person name="Hoheisel J.D."/>
        </authorList>
    </citation>
    <scope>NUCLEOTIDE SEQUENCE [LARGE SCALE GENOMIC DNA]</scope>
    <source>
        <strain>ATCC 204508 / S288c</strain>
    </source>
</reference>
<reference key="3">
    <citation type="journal article" date="2014" name="G3 (Bethesda)">
        <title>The reference genome sequence of Saccharomyces cerevisiae: Then and now.</title>
        <authorList>
            <person name="Engel S.R."/>
            <person name="Dietrich F.S."/>
            <person name="Fisk D.G."/>
            <person name="Binkley G."/>
            <person name="Balakrishnan R."/>
            <person name="Costanzo M.C."/>
            <person name="Dwight S.S."/>
            <person name="Hitz B.C."/>
            <person name="Karra K."/>
            <person name="Nash R.S."/>
            <person name="Weng S."/>
            <person name="Wong E.D."/>
            <person name="Lloyd P."/>
            <person name="Skrzypek M.S."/>
            <person name="Miyasato S.R."/>
            <person name="Simison M."/>
            <person name="Cherry J.M."/>
        </authorList>
    </citation>
    <scope>GENOME REANNOTATION</scope>
    <source>
        <strain>ATCC 204508 / S288c</strain>
    </source>
</reference>
<reference key="4">
    <citation type="journal article" date="2007" name="Genome Res.">
        <title>Approaching a complete repository of sequence-verified protein-encoding clones for Saccharomyces cerevisiae.</title>
        <authorList>
            <person name="Hu Y."/>
            <person name="Rolfs A."/>
            <person name="Bhullar B."/>
            <person name="Murthy T.V.S."/>
            <person name="Zhu C."/>
            <person name="Berger M.F."/>
            <person name="Camargo A.A."/>
            <person name="Kelley F."/>
            <person name="McCarron S."/>
            <person name="Jepson D."/>
            <person name="Richardson A."/>
            <person name="Raphael J."/>
            <person name="Moreira D."/>
            <person name="Taycher E."/>
            <person name="Zuo D."/>
            <person name="Mohr S."/>
            <person name="Kane M.F."/>
            <person name="Williamson J."/>
            <person name="Simpson A.J.G."/>
            <person name="Bulyk M.L."/>
            <person name="Harlow E."/>
            <person name="Marsischky G."/>
            <person name="Kolodner R.D."/>
            <person name="LaBaer J."/>
        </authorList>
    </citation>
    <scope>NUCLEOTIDE SEQUENCE [GENOMIC DNA]</scope>
    <source>
        <strain>ATCC 204508 / S288c</strain>
    </source>
</reference>
<reference key="5">
    <citation type="journal article" date="2003" name="Nature">
        <title>Global analysis of protein expression in yeast.</title>
        <authorList>
            <person name="Ghaemmaghami S."/>
            <person name="Huh W.-K."/>
            <person name="Bower K."/>
            <person name="Howson R.W."/>
            <person name="Belle A."/>
            <person name="Dephoure N."/>
            <person name="O'Shea E.K."/>
            <person name="Weissman J.S."/>
        </authorList>
    </citation>
    <scope>LEVEL OF PROTEIN EXPRESSION [LARGE SCALE ANALYSIS]</scope>
</reference>
<evidence type="ECO:0000250" key="1"/>
<evidence type="ECO:0000255" key="2">
    <source>
        <dbReference type="PROSITE-ProRule" id="PRU00156"/>
    </source>
</evidence>
<evidence type="ECO:0000269" key="3">
    <source>
    </source>
</evidence>
<evidence type="ECO:0000305" key="4"/>
<keyword id="KW-0963">Cytoplasm</keyword>
<keyword id="KW-0413">Isomerase</keyword>
<keyword id="KW-1185">Reference proteome</keyword>
<keyword id="KW-0677">Repeat</keyword>
<keyword id="KW-0697">Rotamase</keyword>
<keyword id="KW-0802">TPR repeat</keyword>
<dbReference type="EC" id="5.2.1.8"/>
<dbReference type="EMBL" id="U48867">
    <property type="protein sequence ID" value="AAC49414.1"/>
    <property type="molecule type" value="mRNA"/>
</dbReference>
<dbReference type="EMBL" id="U14913">
    <property type="protein sequence ID" value="AAB67445.1"/>
    <property type="molecule type" value="Genomic_DNA"/>
</dbReference>
<dbReference type="EMBL" id="AY557959">
    <property type="protein sequence ID" value="AAS56285.1"/>
    <property type="molecule type" value="Genomic_DNA"/>
</dbReference>
<dbReference type="EMBL" id="BK006945">
    <property type="protein sequence ID" value="DAA09533.1"/>
    <property type="molecule type" value="Genomic_DNA"/>
</dbReference>
<dbReference type="PIR" id="S48567">
    <property type="entry name" value="S48567"/>
</dbReference>
<dbReference type="RefSeq" id="NP_013317.1">
    <property type="nucleotide sequence ID" value="NM_001182103.1"/>
</dbReference>
<dbReference type="SMR" id="P53691"/>
<dbReference type="BioGRID" id="31484">
    <property type="interactions" value="231"/>
</dbReference>
<dbReference type="DIP" id="DIP-1274N"/>
<dbReference type="FunCoup" id="P53691">
    <property type="interactions" value="1336"/>
</dbReference>
<dbReference type="IntAct" id="P53691">
    <property type="interactions" value="79"/>
</dbReference>
<dbReference type="MINT" id="P53691"/>
<dbReference type="STRING" id="4932.YLR216C"/>
<dbReference type="iPTMnet" id="P53691"/>
<dbReference type="PaxDb" id="4932-YLR216C"/>
<dbReference type="PeptideAtlas" id="P53691"/>
<dbReference type="EnsemblFungi" id="YLR216C_mRNA">
    <property type="protein sequence ID" value="YLR216C"/>
    <property type="gene ID" value="YLR216C"/>
</dbReference>
<dbReference type="GeneID" id="850914"/>
<dbReference type="KEGG" id="sce:YLR216C"/>
<dbReference type="AGR" id="SGD:S000004206"/>
<dbReference type="SGD" id="S000004206">
    <property type="gene designation" value="CPR6"/>
</dbReference>
<dbReference type="VEuPathDB" id="FungiDB:YLR216C"/>
<dbReference type="eggNOG" id="KOG0546">
    <property type="taxonomic scope" value="Eukaryota"/>
</dbReference>
<dbReference type="GeneTree" id="ENSGT00940000154672"/>
<dbReference type="HOGENOM" id="CLU_012062_37_0_1"/>
<dbReference type="InParanoid" id="P53691"/>
<dbReference type="OMA" id="EMEQNCN"/>
<dbReference type="OrthoDB" id="193499at2759"/>
<dbReference type="BioCyc" id="YEAST:YLR216C-MONOMER"/>
<dbReference type="BioGRID-ORCS" id="850914">
    <property type="hits" value="2 hits in 10 CRISPR screens"/>
</dbReference>
<dbReference type="PRO" id="PR:P53691"/>
<dbReference type="Proteomes" id="UP000002311">
    <property type="component" value="Chromosome XII"/>
</dbReference>
<dbReference type="RNAct" id="P53691">
    <property type="molecule type" value="protein"/>
</dbReference>
<dbReference type="GO" id="GO:0005737">
    <property type="term" value="C:cytoplasm"/>
    <property type="evidence" value="ECO:0000314"/>
    <property type="project" value="SGD"/>
</dbReference>
<dbReference type="GO" id="GO:0043231">
    <property type="term" value="C:intracellular membrane-bounded organelle"/>
    <property type="evidence" value="ECO:0000318"/>
    <property type="project" value="GO_Central"/>
</dbReference>
<dbReference type="GO" id="GO:0016018">
    <property type="term" value="F:cyclosporin A binding"/>
    <property type="evidence" value="ECO:0000318"/>
    <property type="project" value="GO_Central"/>
</dbReference>
<dbReference type="GO" id="GO:0003755">
    <property type="term" value="F:peptidyl-prolyl cis-trans isomerase activity"/>
    <property type="evidence" value="ECO:0000314"/>
    <property type="project" value="SGD"/>
</dbReference>
<dbReference type="GO" id="GO:0043022">
    <property type="term" value="F:ribosome binding"/>
    <property type="evidence" value="ECO:0000314"/>
    <property type="project" value="SGD"/>
</dbReference>
<dbReference type="GO" id="GO:0051082">
    <property type="term" value="F:unfolded protein binding"/>
    <property type="evidence" value="ECO:0000314"/>
    <property type="project" value="SGD"/>
</dbReference>
<dbReference type="GO" id="GO:0006457">
    <property type="term" value="P:protein folding"/>
    <property type="evidence" value="ECO:0000314"/>
    <property type="project" value="SGD"/>
</dbReference>
<dbReference type="GO" id="GO:0042026">
    <property type="term" value="P:protein refolding"/>
    <property type="evidence" value="ECO:0000314"/>
    <property type="project" value="SGD"/>
</dbReference>
<dbReference type="CDD" id="cd01926">
    <property type="entry name" value="cyclophilin_ABH_like"/>
    <property type="match status" value="1"/>
</dbReference>
<dbReference type="FunFam" id="2.40.100.10:FF:000045">
    <property type="entry name" value="Peptidyl-prolyl cis-trans isomerase D"/>
    <property type="match status" value="1"/>
</dbReference>
<dbReference type="FunFam" id="1.25.40.10:FF:000029">
    <property type="entry name" value="peptidyl-prolyl cis-trans isomerase D"/>
    <property type="match status" value="1"/>
</dbReference>
<dbReference type="Gene3D" id="2.40.100.10">
    <property type="entry name" value="Cyclophilin-like"/>
    <property type="match status" value="1"/>
</dbReference>
<dbReference type="Gene3D" id="1.25.40.10">
    <property type="entry name" value="Tetratricopeptide repeat domain"/>
    <property type="match status" value="1"/>
</dbReference>
<dbReference type="InterPro" id="IPR029000">
    <property type="entry name" value="Cyclophilin-like_dom_sf"/>
</dbReference>
<dbReference type="InterPro" id="IPR020892">
    <property type="entry name" value="Cyclophilin-type_PPIase_CS"/>
</dbReference>
<dbReference type="InterPro" id="IPR002130">
    <property type="entry name" value="Cyclophilin-type_PPIase_dom"/>
</dbReference>
<dbReference type="InterPro" id="IPR011990">
    <property type="entry name" value="TPR-like_helical_dom_sf"/>
</dbReference>
<dbReference type="InterPro" id="IPR019734">
    <property type="entry name" value="TPR_rpt"/>
</dbReference>
<dbReference type="PANTHER" id="PTHR11071">
    <property type="entry name" value="PEPTIDYL-PROLYL CIS-TRANS ISOMERASE"/>
    <property type="match status" value="1"/>
</dbReference>
<dbReference type="PANTHER" id="PTHR11071:SF561">
    <property type="entry name" value="PEPTIDYL-PROLYL CIS-TRANS ISOMERASE D-RELATED"/>
    <property type="match status" value="1"/>
</dbReference>
<dbReference type="Pfam" id="PF00160">
    <property type="entry name" value="Pro_isomerase"/>
    <property type="match status" value="1"/>
</dbReference>
<dbReference type="PRINTS" id="PR00153">
    <property type="entry name" value="CSAPPISMRASE"/>
</dbReference>
<dbReference type="SMART" id="SM00028">
    <property type="entry name" value="TPR"/>
    <property type="match status" value="1"/>
</dbReference>
<dbReference type="SUPFAM" id="SSF50891">
    <property type="entry name" value="Cyclophilin-like"/>
    <property type="match status" value="1"/>
</dbReference>
<dbReference type="SUPFAM" id="SSF48452">
    <property type="entry name" value="TPR-like"/>
    <property type="match status" value="1"/>
</dbReference>
<dbReference type="PROSITE" id="PS00170">
    <property type="entry name" value="CSA_PPIASE_1"/>
    <property type="match status" value="1"/>
</dbReference>
<dbReference type="PROSITE" id="PS50072">
    <property type="entry name" value="CSA_PPIASE_2"/>
    <property type="match status" value="1"/>
</dbReference>
<dbReference type="PROSITE" id="PS50005">
    <property type="entry name" value="TPR"/>
    <property type="match status" value="1"/>
</dbReference>
<dbReference type="PROSITE" id="PS50293">
    <property type="entry name" value="TPR_REGION"/>
    <property type="match status" value="1"/>
</dbReference>
<comment type="function">
    <text>PPIases accelerate the folding of proteins. It catalyzes the cis-trans isomerization of proline imidic peptide bonds in oligopeptides.</text>
</comment>
<comment type="catalytic activity">
    <reaction>
        <text>[protein]-peptidylproline (omega=180) = [protein]-peptidylproline (omega=0)</text>
        <dbReference type="Rhea" id="RHEA:16237"/>
        <dbReference type="Rhea" id="RHEA-COMP:10747"/>
        <dbReference type="Rhea" id="RHEA-COMP:10748"/>
        <dbReference type="ChEBI" id="CHEBI:83833"/>
        <dbReference type="ChEBI" id="CHEBI:83834"/>
        <dbReference type="EC" id="5.2.1.8"/>
    </reaction>
</comment>
<comment type="subunit">
    <text>Interacts with RPD3.</text>
</comment>
<comment type="interaction">
    <interactant intactId="EBI-5429">
        <id>P53691</id>
    </interactant>
    <interactant intactId="EBI-8659">
        <id>P02829</id>
        <label>HSP82</label>
    </interactant>
    <organismsDiffer>false</organismsDiffer>
    <experiments>13</experiments>
</comment>
<comment type="interaction">
    <interactant intactId="EBI-5429">
        <id>P53691</id>
    </interactant>
    <interactant intactId="EBI-15864">
        <id>P32561</id>
        <label>RPD3</label>
    </interactant>
    <organismsDiffer>false</organismsDiffer>
    <experiments>2</experiments>
</comment>
<comment type="interaction">
    <interactant intactId="EBI-5429">
        <id>P53691</id>
    </interactant>
    <interactant intactId="EBI-14372">
        <id>P07259</id>
        <label>URA2</label>
    </interactant>
    <organismsDiffer>false</organismsDiffer>
    <experiments>2</experiments>
</comment>
<comment type="subcellular location">
    <subcellularLocation>
        <location evidence="1">Cytoplasm</location>
    </subcellularLocation>
</comment>
<comment type="miscellaneous">
    <text evidence="3">Present with 18600 molecules/cell in log phase SD medium.</text>
</comment>
<comment type="similarity">
    <text evidence="4">Belongs to the cyclophilin-type PPIase family. PPIase D subfamily.</text>
</comment>
<accession>P53691</accession>
<accession>D6VYL7</accession>
<accession>Q6Q5K7</accession>
<protein>
    <recommendedName>
        <fullName>Peptidyl-prolyl cis-trans isomerase CPR6</fullName>
        <shortName>PPIase CPR6</shortName>
        <ecNumber>5.2.1.8</ecNumber>
    </recommendedName>
    <alternativeName>
        <fullName>Rotamase CPR6</fullName>
    </alternativeName>
</protein>
<proteinExistence type="evidence at protein level"/>
<feature type="chain" id="PRO_0000064173" description="Peptidyl-prolyl cis-trans isomerase CPR6">
    <location>
        <begin position="1"/>
        <end position="371"/>
    </location>
</feature>
<feature type="domain" description="PPIase cyclophilin-type" evidence="2">
    <location>
        <begin position="7"/>
        <end position="174"/>
    </location>
</feature>
<feature type="repeat" description="TPR 1">
    <location>
        <begin position="219"/>
        <end position="252"/>
    </location>
</feature>
<feature type="repeat" description="TPR 2">
    <location>
        <begin position="270"/>
        <end position="303"/>
    </location>
</feature>
<feature type="repeat" description="TPR 3">
    <location>
        <begin position="308"/>
        <end position="341"/>
    </location>
</feature>
<feature type="sequence conflict" description="In Ref. 4; AAS56285." evidence="4" ref="4">
    <original>I</original>
    <variation>V</variation>
    <location>
        <position position="12"/>
    </location>
</feature>
<name>PPID_YEAST</name>
<organism>
    <name type="scientific">Saccharomyces cerevisiae (strain ATCC 204508 / S288c)</name>
    <name type="common">Baker's yeast</name>
    <dbReference type="NCBI Taxonomy" id="559292"/>
    <lineage>
        <taxon>Eukaryota</taxon>
        <taxon>Fungi</taxon>
        <taxon>Dikarya</taxon>
        <taxon>Ascomycota</taxon>
        <taxon>Saccharomycotina</taxon>
        <taxon>Saccharomycetes</taxon>
        <taxon>Saccharomycetales</taxon>
        <taxon>Saccharomycetaceae</taxon>
        <taxon>Saccharomyces</taxon>
    </lineage>
</organism>
<gene>
    <name type="primary">CPR6</name>
    <name type="ordered locus">YLR216C</name>
    <name type="ORF">L8167.24</name>
</gene>